<accession>P0A955</accession>
<accession>P10177</accession>
<comment type="function">
    <text evidence="1 3 4 5 6 8 9 12 13 23">Involved in the degradation of glucose via the Entner-Doudoroff pathway (PubMed:15659677, PubMed:1624451). Catalyzes the reversible, stereospecific retro-aldol cleavage of 2-keto-3-deoxy-6-phosphogluconate (KDPG) to pyruvate and D-glyceraldehyde-3-phosphate (PubMed:11342129, PubMed:17962400, PubMed:17981470). In vitro, can also catalyze the cleavage of 2-keto-4-hydroxy-4-(2'-pyridyl)butyrate (KHPB), 2-keto-3-deoxy-6-phosphogalactonate (KDPGal), and of the substrate analogs 2-keto-3-deoxy-gluconate (KDG) and 2-keto-4-hydroxyoctonate (KHO) (PubMed:17962400). Can accept some nucleophiles other than pyruvate, including 2-oxobutanoate, phenylpyruvate and fluorobutanoate (PubMed:17981470). In addition to its KDPG aldolase activity, catalyzes the reversible cleavage of 2-keto-4-hydroxyglutarate (KHG) to glyoxylate and pyruvate (PubMed:1098660, PubMed:1339418, PubMed:4560498, PubMed:7016177). The enzyme is stereoselective for the S-enantiomer of KHG (PubMed:1098660, PubMed:4560498). Cleavage of KHG could serve in tricarboxylic acid (TCA) cycle regulation or, when operating in the reverse direction, in the detoxification of glyoxylate (Probable). Finally, also shows a high level of oxaloacetate beta-decarboxylase activity (PubMed:1339418, PubMed:4560498). The enzyme could have several physiological roles and function as a stress response protein in addition to its role in the catabolism of sugar acids (PubMed:15659677).</text>
</comment>
<comment type="catalytic activity">
    <reaction evidence="3 8 9">
        <text>2-dehydro-3-deoxy-6-phospho-D-gluconate = D-glyceraldehyde 3-phosphate + pyruvate</text>
        <dbReference type="Rhea" id="RHEA:17089"/>
        <dbReference type="ChEBI" id="CHEBI:15361"/>
        <dbReference type="ChEBI" id="CHEBI:57569"/>
        <dbReference type="ChEBI" id="CHEBI:59776"/>
        <dbReference type="EC" id="4.1.2.14"/>
    </reaction>
</comment>
<comment type="catalytic activity">
    <reaction evidence="1 12 22 29">
        <text>(4S)-4-hydroxy-2-oxoglutarate = glyoxylate + pyruvate</text>
        <dbReference type="Rhea" id="RHEA:35639"/>
        <dbReference type="ChEBI" id="CHEBI:15361"/>
        <dbReference type="ChEBI" id="CHEBI:36655"/>
        <dbReference type="ChEBI" id="CHEBI:71685"/>
        <dbReference type="EC" id="4.1.3.42"/>
    </reaction>
</comment>
<comment type="catalytic activity">
    <reaction evidence="4 12">
        <text>oxaloacetate + H(+) = pyruvate + CO2</text>
        <dbReference type="Rhea" id="RHEA:15641"/>
        <dbReference type="ChEBI" id="CHEBI:15361"/>
        <dbReference type="ChEBI" id="CHEBI:15378"/>
        <dbReference type="ChEBI" id="CHEBI:16452"/>
        <dbReference type="ChEBI" id="CHEBI:16526"/>
        <dbReference type="EC" id="4.1.1.112"/>
    </reaction>
</comment>
<comment type="activity regulation">
    <text evidence="10 12 13">The formation of KHG is inhibited by halides and substrate analogs such as hydroxypyruvate, tartrate, oxalate or acetaldehyde (PubMed:7016177). KHG aldolase activity is also inhibited by bromopyruvate, which specifically esterifies Glu-45 (PubMed:1978721). Activity is partially inhibited by p-mercuriphenylsulfonate, iodoacetate and N-ethylmaleimide (PubMed:4560498).</text>
</comment>
<comment type="biophysicochemical properties">
    <kinetics>
        <KM evidence="8 9">0.1 mM for KDPG</KM>
        <KM evidence="8">32 mM for KHPB</KM>
        <KM evidence="8">0.1 mM for KDPGal</KM>
        <KM evidence="9">0.6 mM for KDPGal</KM>
        <KM evidence="8">1.9 mM for KDG</KM>
        <KM evidence="8">150 mM for KHO</KM>
        <KM evidence="12">2.3 mM for (4S)-4-hydroxy-2-oxoglutarate</KM>
        <KM evidence="4">2.4 mM for 4-hydroxy-2-oxoglutarate</KM>
        <KM evidence="4">0.8 mM for oxaloacetate</KM>
        <KM evidence="3">9 mM for 2-oxobutyrate</KM>
        <KM evidence="3">10 mM for pyruvate</KM>
        <Vmax evidence="12">7.9 umol/min/mg enzyme for KHG aldolase activity</Vmax>
        <Vmax evidence="4">3.4 umol/min/mg enzyme for KHG aldolase activity</Vmax>
        <Vmax evidence="4">2.1 umol/min/mg enzyme for oxaloacetate decarboxylase activity</Vmax>
        <text evidence="3 8 9">kcat is 83 sec(-1) with KDPG as substrate (PubMed:17962400). kcat is 80 sec(-1) with KDPG as substrate (PubMed:17981470). kcat is 11 sec(-1) with KHPB as substrate (PubMed:17962400). kcat is 0.0063 sec(-1) with KDPGal as substrate (PubMed:17962400). kcat is 0.01 sec(-1) with KDPGal as substrate (PubMed:17981470). kcat is 0.019 sec(-1) with KDG as substrate (PubMed:17962400). kcat is 2 sec(-1) with KHO as substrate (PubMed:17962400). kcat is 0.0121 sec(-1) with pyruvate as substrate (PubMed:11342129). kcat is 0.0004 sec(-1) with 2-oxobutyrate as substrate (PubMed:11342129).</text>
    </kinetics>
    <phDependence>
        <text evidence="4 12">Optimum pH is 8.6 for KHG aldolase activity (PubMed:4560498). Optimum pH is 8.4 for KHG aldolase activity (PubMed:1339418).</text>
    </phDependence>
</comment>
<comment type="pathway">
    <text evidence="23 24">Carbohydrate acid metabolism; 2-dehydro-3-deoxy-D-gluconate degradation; D-glyceraldehyde 3-phosphate and pyruvate from 2-dehydro-3-deoxy-D-gluconate: step 2/2.</text>
</comment>
<comment type="pathway">
    <text>Carbohydrate metabolism; glyoxylate and dicarboxylate metabolism.</text>
</comment>
<comment type="subunit">
    <text evidence="2 3 4 7 11 12">Homotrimer.</text>
</comment>
<comment type="interaction">
    <interactant intactId="EBI-558114">
        <id>P0A955</id>
    </interactant>
    <interactant intactId="EBI-558114">
        <id>P0A955</id>
        <label>eda</label>
    </interactant>
    <organismsDiffer>false</organismsDiffer>
    <experiments>3</experiments>
</comment>
<comment type="subcellular location">
    <subcellularLocation>
        <location evidence="19">Cytoplasm</location>
    </subcellularLocation>
</comment>
<comment type="induction">
    <text evidence="5 6">Part of the edd-eda operon, whose expression is controlled by three functional promoters (P1, P2 and P4), each of which is responsible for induction under different growth conditions (PubMed:15659677, PubMed:1624451). Both P2 and P4 are responsible for the high basal level of expression (PubMed:15659677, PubMed:1624451). P1 controls induction on gluconate and is regulated by GntR (PubMed:15659677). P2 is induced by growth on glucuronate, galacturonate and methyl-beta-D-glucuronide, and is mediated directly by KdgR (PubMed:15659677). P4 is active under conditions of phosphate starvation and is directly controlled by PhoB (PubMed:15659677). In addition, starvation for carbon, but not the transition to stationary phase, slightly increases Eda synthesis (PubMed:15659677). CsrA exerts indirect negative control of Eda levels (PubMed:15659677).</text>
</comment>
<comment type="disruption phenotype">
    <text evidence="4">Cells lacking this gene show no detectable KHG aldolase activity.</text>
</comment>
<comment type="biotechnology">
    <text evidence="3 8">Is an attractive enzyme for development as a biocatalyst, however, as with most enzymatic catalysts, substrate selectivity ultimately limits the broad use of KDPG aldolase as a synthetic reagent (PubMed:17962400). The enzyme has been the subject of directed evolution studies and structure-based approach to identify mutants with enhanced substrate specificity (PubMed:11342129, PubMed:17962400). Site-directed mutagenesis of the active site or the phosphate-binding pocket can expand substrate selectivity for unnatural substrates for use in biocatalysis applications (PubMed:11342129, PubMed:17962400).</text>
</comment>
<comment type="similarity">
    <text evidence="19">Belongs to the KHG/KDPG aldolase family.</text>
</comment>
<dbReference type="EC" id="4.1.3.42" evidence="1 12 22 29"/>
<dbReference type="EC" id="4.1.2.14" evidence="3 8 9"/>
<dbReference type="EC" id="4.1.1.112" evidence="4 12"/>
<dbReference type="EMBL" id="X68871">
    <property type="protein sequence ID" value="CAA48732.1"/>
    <property type="molecule type" value="Genomic_DNA"/>
</dbReference>
<dbReference type="EMBL" id="M87458">
    <property type="protein sequence ID" value="AAA23723.1"/>
    <property type="molecule type" value="Genomic_DNA"/>
</dbReference>
<dbReference type="EMBL" id="L20897">
    <property type="protein sequence ID" value="AAA23862.1"/>
    <property type="molecule type" value="Genomic_DNA"/>
</dbReference>
<dbReference type="EMBL" id="X63694">
    <property type="protein sequence ID" value="CAA45222.1"/>
    <property type="molecule type" value="Genomic_DNA"/>
</dbReference>
<dbReference type="EMBL" id="U00096">
    <property type="protein sequence ID" value="AAC74920.1"/>
    <property type="molecule type" value="Genomic_DNA"/>
</dbReference>
<dbReference type="EMBL" id="AP009048">
    <property type="protein sequence ID" value="BAA15658.1"/>
    <property type="molecule type" value="Genomic_DNA"/>
</dbReference>
<dbReference type="PIR" id="B42986">
    <property type="entry name" value="ADECOG"/>
</dbReference>
<dbReference type="RefSeq" id="NP_416364.1">
    <property type="nucleotide sequence ID" value="NC_000913.3"/>
</dbReference>
<dbReference type="RefSeq" id="WP_000800512.1">
    <property type="nucleotide sequence ID" value="NZ_STEB01000009.1"/>
</dbReference>
<dbReference type="PDB" id="1EUA">
    <property type="method" value="X-ray"/>
    <property type="resolution" value="1.95 A"/>
    <property type="chains" value="A/B/C=1-213"/>
</dbReference>
<dbReference type="PDB" id="1EUN">
    <property type="method" value="X-ray"/>
    <property type="resolution" value="2.00 A"/>
    <property type="chains" value="A/B/C=1-213"/>
</dbReference>
<dbReference type="PDB" id="1FQ0">
    <property type="method" value="X-ray"/>
    <property type="resolution" value="2.10 A"/>
    <property type="chains" value="A/B/C=1-213"/>
</dbReference>
<dbReference type="PDB" id="1FWR">
    <property type="method" value="X-ray"/>
    <property type="resolution" value="2.70 A"/>
    <property type="chains" value="A/B/C=1-213"/>
</dbReference>
<dbReference type="PDB" id="1WAU">
    <property type="method" value="X-ray"/>
    <property type="resolution" value="2.80 A"/>
    <property type="chains" value="A=1-213"/>
</dbReference>
<dbReference type="PDB" id="1WBH">
    <property type="method" value="X-ray"/>
    <property type="resolution" value="1.55 A"/>
    <property type="chains" value="A/B/C=1-213"/>
</dbReference>
<dbReference type="PDB" id="2C0A">
    <property type="method" value="X-ray"/>
    <property type="resolution" value="1.55 A"/>
    <property type="chains" value="A/B/C=1-213"/>
</dbReference>
<dbReference type="PDBsum" id="1EUA"/>
<dbReference type="PDBsum" id="1EUN"/>
<dbReference type="PDBsum" id="1FQ0"/>
<dbReference type="PDBsum" id="1FWR"/>
<dbReference type="PDBsum" id="1WAU"/>
<dbReference type="PDBsum" id="1WBH"/>
<dbReference type="PDBsum" id="2C0A"/>
<dbReference type="SMR" id="P0A955"/>
<dbReference type="BioGRID" id="4259153">
    <property type="interactions" value="37"/>
</dbReference>
<dbReference type="BioGRID" id="850724">
    <property type="interactions" value="2"/>
</dbReference>
<dbReference type="DIP" id="DIP-36196N"/>
<dbReference type="FunCoup" id="P0A955">
    <property type="interactions" value="397"/>
</dbReference>
<dbReference type="IntAct" id="P0A955">
    <property type="interactions" value="10"/>
</dbReference>
<dbReference type="STRING" id="511145.b1850"/>
<dbReference type="ChEMBL" id="CHEMBL4296292"/>
<dbReference type="jPOST" id="P0A955"/>
<dbReference type="PaxDb" id="511145-b1850"/>
<dbReference type="EnsemblBacteria" id="AAC74920">
    <property type="protein sequence ID" value="AAC74920"/>
    <property type="gene ID" value="b1850"/>
</dbReference>
<dbReference type="GeneID" id="93776117"/>
<dbReference type="GeneID" id="946367"/>
<dbReference type="KEGG" id="ecj:JW1839"/>
<dbReference type="KEGG" id="eco:b1850"/>
<dbReference type="KEGG" id="ecoc:C3026_10540"/>
<dbReference type="PATRIC" id="fig|1411691.4.peg.399"/>
<dbReference type="EchoBASE" id="EB0252"/>
<dbReference type="eggNOG" id="COG0800">
    <property type="taxonomic scope" value="Bacteria"/>
</dbReference>
<dbReference type="HOGENOM" id="CLU_077795_1_1_6"/>
<dbReference type="InParanoid" id="P0A955"/>
<dbReference type="OMA" id="FFPAEYC"/>
<dbReference type="OrthoDB" id="9805177at2"/>
<dbReference type="PhylomeDB" id="P0A955"/>
<dbReference type="BioCyc" id="EcoCyc:KDPGALDOL-4OH2OXOGLUTARALDOL-MONOMER"/>
<dbReference type="BioCyc" id="MetaCyc:KDPGALDOL-4OH2OXOGLUTARALDOL-MONOMER"/>
<dbReference type="BRENDA" id="4.1.2.14">
    <property type="organism ID" value="2026"/>
</dbReference>
<dbReference type="BRENDA" id="4.1.3.16">
    <property type="organism ID" value="2026"/>
</dbReference>
<dbReference type="BRENDA" id="4.1.3.42">
    <property type="organism ID" value="2026"/>
</dbReference>
<dbReference type="UniPathway" id="UPA00227"/>
<dbReference type="UniPathway" id="UPA00856">
    <property type="reaction ID" value="UER00829"/>
</dbReference>
<dbReference type="EvolutionaryTrace" id="P0A955"/>
<dbReference type="PRO" id="PR:P0A955"/>
<dbReference type="Proteomes" id="UP000000625">
    <property type="component" value="Chromosome"/>
</dbReference>
<dbReference type="GO" id="GO:0005829">
    <property type="term" value="C:cytosol"/>
    <property type="evidence" value="ECO:0000314"/>
    <property type="project" value="EcoCyc"/>
</dbReference>
<dbReference type="GO" id="GO:0016020">
    <property type="term" value="C:membrane"/>
    <property type="evidence" value="ECO:0007005"/>
    <property type="project" value="UniProtKB"/>
</dbReference>
<dbReference type="GO" id="GO:0106009">
    <property type="term" value="F:(4S)-4-hydroxy-2-oxoglutarate aldolase activity"/>
    <property type="evidence" value="ECO:0000314"/>
    <property type="project" value="EcoCyc"/>
</dbReference>
<dbReference type="GO" id="GO:0008700">
    <property type="term" value="F:(R,S)-4-hydroxy-2-oxoglutarate aldolase activity"/>
    <property type="evidence" value="ECO:0000314"/>
    <property type="project" value="UniProtKB"/>
</dbReference>
<dbReference type="GO" id="GO:0008675">
    <property type="term" value="F:2-dehydro-3-deoxy-phosphogluconate aldolase activity"/>
    <property type="evidence" value="ECO:0000314"/>
    <property type="project" value="EcoCyc"/>
</dbReference>
<dbReference type="GO" id="GO:0016832">
    <property type="term" value="F:aldehyde-lyase activity"/>
    <property type="evidence" value="ECO:0000318"/>
    <property type="project" value="GO_Central"/>
</dbReference>
<dbReference type="GO" id="GO:0042802">
    <property type="term" value="F:identical protein binding"/>
    <property type="evidence" value="ECO:0000353"/>
    <property type="project" value="IntAct"/>
</dbReference>
<dbReference type="GO" id="GO:0008948">
    <property type="term" value="F:oxaloacetate decarboxylase activity"/>
    <property type="evidence" value="ECO:0000314"/>
    <property type="project" value="EcoCyc"/>
</dbReference>
<dbReference type="GO" id="GO:0016833">
    <property type="term" value="F:oxo-acid-lyase activity"/>
    <property type="evidence" value="ECO:0000314"/>
    <property type="project" value="EcoCyc"/>
</dbReference>
<dbReference type="GO" id="GO:0009255">
    <property type="term" value="P:Entner-Doudoroff pathway through 6-phosphogluconate"/>
    <property type="evidence" value="ECO:0000269"/>
    <property type="project" value="EcoCyc"/>
</dbReference>
<dbReference type="CDD" id="cd00452">
    <property type="entry name" value="KDPG_aldolase"/>
    <property type="match status" value="1"/>
</dbReference>
<dbReference type="FunFam" id="3.20.20.70:FF:000054">
    <property type="entry name" value="KHG/KDPG aldolase"/>
    <property type="match status" value="1"/>
</dbReference>
<dbReference type="Gene3D" id="3.20.20.70">
    <property type="entry name" value="Aldolase class I"/>
    <property type="match status" value="1"/>
</dbReference>
<dbReference type="InterPro" id="IPR000887">
    <property type="entry name" value="Aldlse_KDPG_KHG"/>
</dbReference>
<dbReference type="InterPro" id="IPR013785">
    <property type="entry name" value="Aldolase_TIM"/>
</dbReference>
<dbReference type="InterPro" id="IPR031337">
    <property type="entry name" value="KDPG/KHG_AS_1"/>
</dbReference>
<dbReference type="InterPro" id="IPR031338">
    <property type="entry name" value="KDPG/KHG_AS_2"/>
</dbReference>
<dbReference type="NCBIfam" id="TIGR01182">
    <property type="entry name" value="eda"/>
    <property type="match status" value="1"/>
</dbReference>
<dbReference type="NCBIfam" id="NF004325">
    <property type="entry name" value="PRK05718.1"/>
    <property type="match status" value="1"/>
</dbReference>
<dbReference type="PANTHER" id="PTHR30246:SF1">
    <property type="entry name" value="2-DEHYDRO-3-DEOXY-6-PHOSPHOGALACTONATE ALDOLASE-RELATED"/>
    <property type="match status" value="1"/>
</dbReference>
<dbReference type="PANTHER" id="PTHR30246">
    <property type="entry name" value="2-KETO-3-DEOXY-6-PHOSPHOGLUCONATE ALDOLASE"/>
    <property type="match status" value="1"/>
</dbReference>
<dbReference type="Pfam" id="PF01081">
    <property type="entry name" value="Aldolase"/>
    <property type="match status" value="1"/>
</dbReference>
<dbReference type="SUPFAM" id="SSF51569">
    <property type="entry name" value="Aldolase"/>
    <property type="match status" value="1"/>
</dbReference>
<dbReference type="PROSITE" id="PS00159">
    <property type="entry name" value="ALDOLASE_KDPG_KHG_1"/>
    <property type="match status" value="1"/>
</dbReference>
<dbReference type="PROSITE" id="PS00160">
    <property type="entry name" value="ALDOLASE_KDPG_KHG_2"/>
    <property type="match status" value="1"/>
</dbReference>
<protein>
    <recommendedName>
        <fullName evidence="19">KHG/KDPG aldolase</fullName>
    </recommendedName>
    <alternativeName>
        <fullName evidence="19">(4S)-4-hydroxy-2-oxoglutarate aldolase</fullName>
        <ecNumber evidence="1 12 22 29">4.1.3.42</ecNumber>
    </alternativeName>
    <alternativeName>
        <fullName evidence="19">2-dehydro-3-deoxy-phosphogluconate aldolase</fullName>
        <ecNumber evidence="3 8 9">4.1.2.14</ecNumber>
    </alternativeName>
    <alternativeName>
        <fullName evidence="16">2-keto-3-deoxy-6-phosphogluconate aldolase</fullName>
        <shortName evidence="16">KDPG aldolase</shortName>
    </alternativeName>
    <alternativeName>
        <fullName evidence="14 17">2-keto-4-hydroxyglutarate aldolase</fullName>
        <shortName evidence="17">KHG aldolase</shortName>
        <shortName evidence="14">Ketohydroxyglutarate aldolase</shortName>
    </alternativeName>
    <alternativeName>
        <fullName evidence="19">Entner-Douderoff aldolase</fullName>
    </alternativeName>
    <alternativeName>
        <fullName evidence="19">Oxaloacetate decarboxylase</fullName>
        <ecNumber evidence="4 12">4.1.1.112</ecNumber>
    </alternativeName>
    <alternativeName>
        <fullName>Phospho-2-dehydro-3-deoxygluconate aldolase</fullName>
    </alternativeName>
    <alternativeName>
        <fullName>Phospho-2-keto-3-deoxygluconate aldolase</fullName>
    </alternativeName>
</protein>
<feature type="chain" id="PRO_0000201037" description="KHG/KDPG aldolase">
    <location>
        <begin position="1"/>
        <end position="213"/>
    </location>
</feature>
<feature type="active site" description="Proton acceptor" evidence="20 21 25 27">
    <location>
        <position position="45"/>
    </location>
</feature>
<feature type="active site" description="Schiff-base intermediate with substrate" evidence="2 21 25 28">
    <location>
        <position position="133"/>
    </location>
</feature>
<feature type="binding site" evidence="2 30">
    <location>
        <position position="49"/>
    </location>
    <ligand>
        <name>pyruvate</name>
        <dbReference type="ChEBI" id="CHEBI:15361"/>
    </ligand>
</feature>
<feature type="binding site" evidence="2 30">
    <location>
        <position position="73"/>
    </location>
    <ligand>
        <name>pyruvate</name>
        <dbReference type="ChEBI" id="CHEBI:15361"/>
    </ligand>
</feature>
<feature type="binding site" description="covalent" evidence="2 30">
    <location>
        <position position="133"/>
    </location>
    <ligand>
        <name>pyruvate</name>
        <dbReference type="ChEBI" id="CHEBI:15361"/>
    </ligand>
</feature>
<feature type="site" description="Plays a major role in determining the stereoselectivity" evidence="26">
    <location>
        <position position="161"/>
    </location>
</feature>
<feature type="mutagenesis site" description="Aldolase activity is significantly impaired." evidence="7">
    <original>E</original>
    <variation>N</variation>
    <location>
        <position position="45"/>
    </location>
</feature>
<feature type="mutagenesis site" description="Absence of aldolase activity. Has reduced catalytic efficiency relative to wild-type protein but demonstrates a considerably altered substrate profile with an enhanced activity against pyridine carboxaldehyde, benzaldehyde and alpha-ketobutyrate; when associated with K-161." evidence="3">
    <original>K</original>
    <variation>Q</variation>
    <location>
        <position position="133"/>
    </location>
</feature>
<feature type="mutagenesis site" description="13-fold decrease in catalytic efficiency with KDPG as substrate and 250-fold increase in catalytic efficiency with KDPGal as substrate." evidence="9">
    <original>T</original>
    <variation>A</variation>
    <location>
        <position position="161"/>
    </location>
</feature>
<feature type="mutagenesis site" description="Has reduced catalytic efficiency relative to wild-type protein but demonstrates a considerably altered substrate profile with an enhanced activity against pyridine carboxaldehyde, benzaldehyde and alpha-ketobutyrate; when associated with Q-133." evidence="3">
    <original>T</original>
    <variation>K</variation>
    <location>
        <position position="161"/>
    </location>
</feature>
<feature type="mutagenesis site" description="Shows little stereoselectivity, accepting KDPG and KDPGal as substrate with roughly equal efficacy. The change in specificity is accompanied by a very significant loss of activity against KDPG and a 5-fold increase in catalytic efficiency with KDPGal as substrate." evidence="9">
    <original>T</original>
    <variation>V</variation>
    <location>
        <position position="161"/>
    </location>
</feature>
<feature type="mutagenesis site" description="Shows activity significantly greater than wild-type." evidence="3">
    <original>N</original>
    <variation>S</variation>
    <location>
        <position position="168"/>
    </location>
</feature>
<feature type="mutagenesis site" description="1.35-fold decrease in catalytic efficiency with KDPG as substrate. Has only a modest effect on the catalytic efficiency with KDG or KHO as substrate." evidence="8">
    <original>S</original>
    <variation>A</variation>
    <location>
        <position position="184"/>
    </location>
</feature>
<feature type="mutagenesis site" description="300-fold decrease in catalytic efficiency with KDPG as substrate. Increases the efficiency for retro-aldol cleavage of both KDG and KHO. Enhances the selectivity for reaction with KHO compared to KDPG by 780-fold." evidence="8">
    <original>S</original>
    <variation>D</variation>
    <location>
        <position position="184"/>
    </location>
</feature>
<feature type="mutagenesis site" description="4-fold decrease in catalytic efficiency with KDPG as substrate. Increases the efficiency for retro-aldol cleavage of both KDG and KHO. 40-fold increase in catalytic efficiency for the synthesis of KHPB, a precursor of nikkomycin, making this mutant a useful biocatalyst for the preparation of fine chemicals." evidence="8">
    <original>S</original>
    <variation>L</variation>
    <location>
        <position position="184"/>
    </location>
</feature>
<feature type="helix" evidence="37">
    <location>
        <begin position="8"/>
        <end position="13"/>
    </location>
</feature>
<feature type="strand" evidence="37">
    <location>
        <begin position="16"/>
        <end position="21"/>
    </location>
</feature>
<feature type="helix" evidence="37">
    <location>
        <begin position="26"/>
        <end position="28"/>
    </location>
</feature>
<feature type="helix" evidence="37">
    <location>
        <begin position="29"/>
        <end position="38"/>
    </location>
</feature>
<feature type="strand" evidence="37">
    <location>
        <begin position="43"/>
        <end position="48"/>
    </location>
</feature>
<feature type="helix" evidence="37">
    <location>
        <begin position="53"/>
        <end position="63"/>
    </location>
</feature>
<feature type="strand" evidence="37">
    <location>
        <begin position="67"/>
        <end position="73"/>
    </location>
</feature>
<feature type="helix" evidence="37">
    <location>
        <begin position="77"/>
        <end position="86"/>
    </location>
</feature>
<feature type="strand" evidence="37">
    <location>
        <begin position="91"/>
        <end position="95"/>
    </location>
</feature>
<feature type="helix" evidence="37">
    <location>
        <begin position="98"/>
        <end position="106"/>
    </location>
</feature>
<feature type="strand" evidence="37">
    <location>
        <begin position="107"/>
        <end position="109"/>
    </location>
</feature>
<feature type="strand" evidence="37">
    <location>
        <begin position="111"/>
        <end position="117"/>
    </location>
</feature>
<feature type="helix" evidence="37">
    <location>
        <begin position="118"/>
        <end position="126"/>
    </location>
</feature>
<feature type="strand" evidence="37">
    <location>
        <begin position="131"/>
        <end position="134"/>
    </location>
</feature>
<feature type="turn" evidence="37">
    <location>
        <begin position="135"/>
        <end position="141"/>
    </location>
</feature>
<feature type="helix" evidence="37">
    <location>
        <begin position="142"/>
        <end position="150"/>
    </location>
</feature>
<feature type="strand" evidence="37">
    <location>
        <begin position="157"/>
        <end position="163"/>
    </location>
</feature>
<feature type="turn" evidence="37">
    <location>
        <begin position="166"/>
        <end position="168"/>
    </location>
</feature>
<feature type="helix" evidence="37">
    <location>
        <begin position="169"/>
        <end position="173"/>
    </location>
</feature>
<feature type="strand" evidence="37">
    <location>
        <begin position="181"/>
        <end position="183"/>
    </location>
</feature>
<feature type="helix" evidence="37">
    <location>
        <begin position="184"/>
        <end position="186"/>
    </location>
</feature>
<feature type="helix" evidence="37">
    <location>
        <begin position="189"/>
        <end position="194"/>
    </location>
</feature>
<feature type="helix" evidence="37">
    <location>
        <begin position="197"/>
        <end position="210"/>
    </location>
</feature>
<proteinExistence type="evidence at protein level"/>
<sequence length="213" mass="22284">MKNWKTSAESILTTGPVVPVIVVKKLEHAVPMAKALVAGGVRVLEVTLRTECAVDAIRAIAKEVPEAIVGAGTVLNPQQLAEVTEAGAQFAISPGLTEPLLKAATEGTIPLIPGISTVSELMLGMDYGLKEFKFFPAEANGGVKALQAIAGPFSQVRFCPTGGISPANYRDYLALKSVLCIGGSWLVPADALEAGDYDRITKLAREAVEGAKL</sequence>
<keyword id="KW-0002">3D-structure</keyword>
<keyword id="KW-0119">Carbohydrate metabolism</keyword>
<keyword id="KW-0963">Cytoplasm</keyword>
<keyword id="KW-0903">Direct protein sequencing</keyword>
<keyword id="KW-0456">Lyase</keyword>
<keyword id="KW-1185">Reference proteome</keyword>
<keyword id="KW-0704">Schiff base</keyword>
<reference key="1">
    <citation type="journal article" date="1988" name="J. Biol. Chem.">
        <title>The complete amino acid sequence and identification of the active-site arginine peptide of Escherichia coli 2-keto-4-hydroxyglutarate aldolase.</title>
        <authorList>
            <person name="Vlahos C.J."/>
            <person name="Dekker E.E."/>
        </authorList>
    </citation>
    <scope>PROTEIN SEQUENCE</scope>
    <scope>SUBUNIT</scope>
    <scope>ACTIVE SITE</scope>
    <source>
        <strain>K12</strain>
    </source>
</reference>
<reference key="2">
    <citation type="journal article" date="1992" name="J. Bacteriol.">
        <title>Cloning, nucleotide sequence, overexpression, and inactivation of the Escherichia coli 2-keto-4-hydroxyglutarate aldolase gene.</title>
        <authorList>
            <person name="Patil R.V."/>
            <person name="Dekker E.E."/>
        </authorList>
    </citation>
    <scope>NUCLEOTIDE SEQUENCE [GENOMIC DNA]</scope>
    <scope>FUNCTION AS A KHG ALDOLASE AND A DECARBOXYLASE</scope>
    <scope>CATALYTIC ACTIVITY</scope>
    <scope>BIOPHYSICOCHEMICAL PROPERTIES</scope>
    <scope>SUBUNIT</scope>
    <scope>DISRUPTION PHENOTYPE</scope>
</reference>
<reference key="3">
    <citation type="journal article" date="1992" name="J. Bacteriol.">
        <title>Molecular characterization of the Entner-Doudoroff pathway in Escherichia coli: sequence analysis and localization of promoters for the edd-eda operon.</title>
        <authorList>
            <person name="Egan S.E."/>
            <person name="Fliege R."/>
            <person name="Tong S."/>
            <person name="Shibata A."/>
            <person name="Wolf R.E. Jr."/>
            <person name="Conway T."/>
        </authorList>
    </citation>
    <scope>NUCLEOTIDE SEQUENCE [GENOMIC DNA]</scope>
    <scope>FUNCTION</scope>
    <scope>INDUCTION</scope>
</reference>
<reference key="4">
    <citation type="submission" date="1993-07" db="EMBL/GenBank/DDBJ databases">
        <title>Purine and one-carbon metabolism in Escherichia coli K12: DNA sequence of a second GAR transformylase.</title>
        <authorList>
            <person name="Smith J.M."/>
            <person name="Nygaard P."/>
        </authorList>
    </citation>
    <scope>NUCLEOTIDE SEQUENCE [GENOMIC DNA]</scope>
    <source>
        <strain>K12</strain>
    </source>
</reference>
<reference key="5">
    <citation type="journal article" date="1993" name="Gene">
        <title>Sequence of the Escherichia coli K-12 edd and eda genes of the Entner-Doudoroff pathway.</title>
        <authorList>
            <person name="Carter A.T."/>
            <person name="Pearson B.M."/>
            <person name="Dickinson J.R."/>
            <person name="Lancashire W.E."/>
        </authorList>
    </citation>
    <scope>NUCLEOTIDE SEQUENCE [GENOMIC DNA]</scope>
    <source>
        <strain>K12</strain>
    </source>
</reference>
<reference key="6">
    <citation type="journal article" date="1996" name="DNA Res.">
        <title>A 460-kb DNA sequence of the Escherichia coli K-12 genome corresponding to the 40.1-50.0 min region on the linkage map.</title>
        <authorList>
            <person name="Itoh T."/>
            <person name="Aiba H."/>
            <person name="Baba T."/>
            <person name="Fujita K."/>
            <person name="Hayashi K."/>
            <person name="Inada T."/>
            <person name="Isono K."/>
            <person name="Kasai H."/>
            <person name="Kimura S."/>
            <person name="Kitakawa M."/>
            <person name="Kitagawa M."/>
            <person name="Makino K."/>
            <person name="Miki T."/>
            <person name="Mizobuchi K."/>
            <person name="Mori H."/>
            <person name="Mori T."/>
            <person name="Motomura K."/>
            <person name="Nakade S."/>
            <person name="Nakamura Y."/>
            <person name="Nashimoto H."/>
            <person name="Nishio Y."/>
            <person name="Oshima T."/>
            <person name="Saito N."/>
            <person name="Sampei G."/>
            <person name="Seki Y."/>
            <person name="Sivasundaram S."/>
            <person name="Tagami H."/>
            <person name="Takeda J."/>
            <person name="Takemoto K."/>
            <person name="Wada C."/>
            <person name="Yamamoto Y."/>
            <person name="Horiuchi T."/>
        </authorList>
    </citation>
    <scope>NUCLEOTIDE SEQUENCE [LARGE SCALE GENOMIC DNA]</scope>
    <source>
        <strain>K12 / W3110 / ATCC 27325 / DSM 5911</strain>
    </source>
</reference>
<reference key="7">
    <citation type="journal article" date="1997" name="Science">
        <title>The complete genome sequence of Escherichia coli K-12.</title>
        <authorList>
            <person name="Blattner F.R."/>
            <person name="Plunkett G. III"/>
            <person name="Bloch C.A."/>
            <person name="Perna N.T."/>
            <person name="Burland V."/>
            <person name="Riley M."/>
            <person name="Collado-Vides J."/>
            <person name="Glasner J.D."/>
            <person name="Rode C.K."/>
            <person name="Mayhew G.F."/>
            <person name="Gregor J."/>
            <person name="Davis N.W."/>
            <person name="Kirkpatrick H.A."/>
            <person name="Goeden M.A."/>
            <person name="Rose D.J."/>
            <person name="Mau B."/>
            <person name="Shao Y."/>
        </authorList>
    </citation>
    <scope>NUCLEOTIDE SEQUENCE [LARGE SCALE GENOMIC DNA]</scope>
    <source>
        <strain>K12 / MG1655 / ATCC 47076</strain>
    </source>
</reference>
<reference key="8">
    <citation type="journal article" date="2006" name="Mol. Syst. Biol.">
        <title>Highly accurate genome sequences of Escherichia coli K-12 strains MG1655 and W3110.</title>
        <authorList>
            <person name="Hayashi K."/>
            <person name="Morooka N."/>
            <person name="Yamamoto Y."/>
            <person name="Fujita K."/>
            <person name="Isono K."/>
            <person name="Choi S."/>
            <person name="Ohtsubo E."/>
            <person name="Baba T."/>
            <person name="Wanner B.L."/>
            <person name="Mori H."/>
            <person name="Horiuchi T."/>
        </authorList>
    </citation>
    <scope>NUCLEOTIDE SEQUENCE [LARGE SCALE GENOMIC DNA]</scope>
    <source>
        <strain>K12 / W3110 / ATCC 27325 / DSM 5911</strain>
    </source>
</reference>
<reference key="9">
    <citation type="journal article" date="1972" name="J. Biol. Chem.">
        <title>Purification, substrate specificity and binding, beta-decarboxylase activity, and other properties of Escherichia coli 2-keto-4-hydroxyglutarate aldolase.</title>
        <authorList>
            <person name="Nishihara H."/>
            <person name="Dekker E.E."/>
        </authorList>
    </citation>
    <scope>FUNCTION AS A KHG ALDOLASE AND A DECARBOXYLASE</scope>
    <scope>CATALYTIC ACTIVITY</scope>
    <scope>ACTIVITY REGULATION</scope>
    <scope>BIOPHYSICOCHEMICAL PROPERTIES</scope>
    <scope>SUBUNIT</scope>
    <source>
        <strain>K12</strain>
    </source>
</reference>
<reference key="10">
    <citation type="journal article" date="1975" name="Biochem. Biophys. Res. Commun.">
        <title>Enzyme stereoselectivity: the reversible reaction catalyzed by 2-keto-4-hydroxyglutarate aldolase of Escherichia coli.</title>
        <authorList>
            <person name="Meloche H.P."/>
            <person name="Monti C.T."/>
            <person name="Dekker E.E."/>
        </authorList>
    </citation>
    <scope>FUNCTION AS A KHG ALDOLASE</scope>
    <scope>CATALYTIC ACTIVITY</scope>
</reference>
<reference key="11">
    <citation type="journal article" date="1981" name="Biochemistry">
        <title>Steady-state kinetics and inhibition studies of the aldol condensation reaction catalyzed by bovine liver and Escherichia coli 2-keto-4-hydroxyglutarate aldolase.</title>
        <authorList>
            <person name="Grady S.R."/>
            <person name="Wang J.K."/>
            <person name="Dekker E.E."/>
        </authorList>
    </citation>
    <scope>FUNCTION AS A KHG ALDOLASE</scope>
    <scope>CATALYTIC ACTIVITY</scope>
    <scope>ACTIVITY REGULATION</scope>
</reference>
<reference key="12">
    <citation type="journal article" date="1990" name="J. Biol. Chem.">
        <title>Active-site residues of 2-keto-4-hydroxyglutarate aldolase from Escherichia coli. Bromopyruvate inactivation and labeling of glutamate 45.</title>
        <authorList>
            <person name="Vlahos C.J."/>
            <person name="Dekker E.E."/>
        </authorList>
    </citation>
    <scope>ACTIVITY REGULATION</scope>
    <scope>ACTIVE SITE</scope>
</reference>
<reference key="13">
    <citation type="journal article" date="1997" name="Electrophoresis">
        <title>Escherichia coli proteome analysis using the gene-protein database.</title>
        <authorList>
            <person name="VanBogelen R.A."/>
            <person name="Abshire K.Z."/>
            <person name="Moldover B."/>
            <person name="Olson E.R."/>
            <person name="Neidhardt F.C."/>
        </authorList>
    </citation>
    <scope>IDENTIFICATION BY 2D-GEL</scope>
</reference>
<reference key="14">
    <citation type="journal article" date="2005" name="J. Bacteriol.">
        <title>Multiple regulators control expression of the Entner-Doudoroff aldolase (Eda) of Escherichia coli.</title>
        <authorList>
            <person name="Murray E.L."/>
            <person name="Conway T."/>
        </authorList>
    </citation>
    <scope>FUNCTION</scope>
    <scope>TRANSCRIPTIONAL REGULATION</scope>
</reference>
<reference key="15">
    <citation type="journal article" date="2007" name="Protein Sci.">
        <title>Mutagenesis of the phosphate-binding pocket of KDPG aldolase enhances selectivity for hydrophobic substrates.</title>
        <authorList>
            <person name="Cheriyan M."/>
            <person name="Toone E.J."/>
            <person name="Fierke C.A."/>
        </authorList>
    </citation>
    <scope>FUNCTION AS A KDPG ALDOLASE</scope>
    <scope>CATALYTIC ACTIVITY</scope>
    <scope>BIOPHYSICOCHEMICAL PROPERTIES</scope>
    <scope>BIOTECHNOLOGY</scope>
    <scope>MUTAGENESIS OF SER-184</scope>
</reference>
<reference key="16">
    <citation type="journal article" date="2008" name="Bioorg. Med. Chem.">
        <title>Characterization and crystal structure of Escherichia coli KDPGal aldolase.</title>
        <authorList>
            <person name="Walters M.J."/>
            <person name="Srikannathasan V."/>
            <person name="McEwan A.R."/>
            <person name="Naismith J.H."/>
            <person name="Fierke C.A."/>
            <person name="Toone E.J."/>
        </authorList>
    </citation>
    <scope>FUNCTION AS A KDPG ALDOLASE</scope>
    <scope>CATALYTIC ACTIVITY</scope>
    <scope>SUBSTRATE SPECIFICITY</scope>
    <scope>BIOPHYSICOCHEMICAL PROPERTIES</scope>
    <scope>MUTAGENESIS OF THR-161</scope>
</reference>
<reference evidence="30 31" key="17">
    <citation type="journal article" date="2001" name="Proc. Natl. Acad. Sci. U.S.A.">
        <title>Covalent intermediate trapped in 2-keto-3-deoxy-6-phosphogluconate (KDPG) aldolase structure at 1.95-A resolution.</title>
        <authorList>
            <person name="Allard J."/>
            <person name="Grochulski P."/>
            <person name="Sygusch J."/>
        </authorList>
    </citation>
    <scope>X-RAY CRYSTALLOGRAPHY (1.95 ANGSTROMS) IN COMPLEX WITH PYRUVATE</scope>
    <scope>REACTION MECHANISM</scope>
    <scope>SUBUNIT</scope>
    <scope>ACTIVE SITE</scope>
</reference>
<reference evidence="32 33" key="18">
    <citation type="journal article" date="2001" name="Structure">
        <title>Directed evolution of a new catalytic site in 2-keto-3-deoxy-6-phosphogluconate aldolase from Escherichia coli.</title>
        <authorList>
            <person name="Wymer N."/>
            <person name="Buchanan L.V."/>
            <person name="Henderson D."/>
            <person name="Mehta N."/>
            <person name="Botting C.H."/>
            <person name="Pocivavsek L."/>
            <person name="Fierke C.A."/>
            <person name="Toone E.J."/>
            <person name="Naismith J.H."/>
        </authorList>
    </citation>
    <scope>X-RAY CRYSTALLOGRAPHY (2.1 ANGSTROMS) OF WILD-TYPE AND DOUBLE MUTANT GLN-133/LYS-161 IN COMPLEXES WITH CITRATE</scope>
    <scope>FUNCTION AS A KDPG ALDOLASE</scope>
    <scope>CATALYTIC ACTIVITY</scope>
    <scope>BIOPHYSICOCHEMICAL PROPERTIES</scope>
    <scope>SUBUNIT</scope>
    <scope>ACTIVE SITE</scope>
    <scope>BIOTECHNOLOGY</scope>
    <scope>MUTAGENESIS OF LYS-133; THR-161 AND ASN-168</scope>
</reference>
<reference evidence="34 35 36" key="19">
    <citation type="journal article" date="2006" name="Bioorg. Med. Chem.">
        <title>Mechanism of the Class I KDPG aldolase.</title>
        <authorList>
            <person name="Fullerton S.W."/>
            <person name="Griffiths J.S."/>
            <person name="Merkel A.B."/>
            <person name="Cheriyan M."/>
            <person name="Wymer N.J."/>
            <person name="Hutchins M.J."/>
            <person name="Fierke C.A."/>
            <person name="Toone E.J."/>
            <person name="Naismith J.H."/>
        </authorList>
    </citation>
    <scope>X-RAY CRYSTALLOGRAPHY (1.55 ANGSTROMS) OF WILD-TYPE AND MUTANT ASN-45 IN COMPLEX WITH PHOSPHATE</scope>
    <scope>REACTION MECHANISM</scope>
    <scope>SUBUNIT</scope>
    <scope>ACTIVE SITE</scope>
    <scope>MUTAGENESIS OF GLU-45</scope>
</reference>
<name>ALKH_ECOLI</name>
<organism>
    <name type="scientific">Escherichia coli (strain K12)</name>
    <dbReference type="NCBI Taxonomy" id="83333"/>
    <lineage>
        <taxon>Bacteria</taxon>
        <taxon>Pseudomonadati</taxon>
        <taxon>Pseudomonadota</taxon>
        <taxon>Gammaproteobacteria</taxon>
        <taxon>Enterobacterales</taxon>
        <taxon>Enterobacteriaceae</taxon>
        <taxon>Escherichia</taxon>
    </lineage>
</organism>
<gene>
    <name evidence="16 18" type="primary">eda</name>
    <name evidence="15" type="synonym">hga</name>
    <name type="synonym">kdgA</name>
    <name type="ordered locus">b1850</name>
    <name type="ordered locus">JW1839</name>
</gene>
<evidence type="ECO:0000269" key="1">
    <source>
    </source>
</evidence>
<evidence type="ECO:0000269" key="2">
    <source>
    </source>
</evidence>
<evidence type="ECO:0000269" key="3">
    <source>
    </source>
</evidence>
<evidence type="ECO:0000269" key="4">
    <source>
    </source>
</evidence>
<evidence type="ECO:0000269" key="5">
    <source>
    </source>
</evidence>
<evidence type="ECO:0000269" key="6">
    <source>
    </source>
</evidence>
<evidence type="ECO:0000269" key="7">
    <source>
    </source>
</evidence>
<evidence type="ECO:0000269" key="8">
    <source>
    </source>
</evidence>
<evidence type="ECO:0000269" key="9">
    <source>
    </source>
</evidence>
<evidence type="ECO:0000269" key="10">
    <source>
    </source>
</evidence>
<evidence type="ECO:0000269" key="11">
    <source>
    </source>
</evidence>
<evidence type="ECO:0000269" key="12">
    <source>
    </source>
</evidence>
<evidence type="ECO:0000269" key="13">
    <source>
    </source>
</evidence>
<evidence type="ECO:0000303" key="14">
    <source>
    </source>
</evidence>
<evidence type="ECO:0000303" key="15">
    <source>
    </source>
</evidence>
<evidence type="ECO:0000303" key="16">
    <source>
    </source>
</evidence>
<evidence type="ECO:0000303" key="17">
    <source>
    </source>
</evidence>
<evidence type="ECO:0000303" key="18">
    <source>
    </source>
</evidence>
<evidence type="ECO:0000305" key="19"/>
<evidence type="ECO:0000305" key="20">
    <source>
    </source>
</evidence>
<evidence type="ECO:0000305" key="21">
    <source>
    </source>
</evidence>
<evidence type="ECO:0000305" key="22">
    <source>
    </source>
</evidence>
<evidence type="ECO:0000305" key="23">
    <source>
    </source>
</evidence>
<evidence type="ECO:0000305" key="24">
    <source>
    </source>
</evidence>
<evidence type="ECO:0000305" key="25">
    <source>
    </source>
</evidence>
<evidence type="ECO:0000305" key="26">
    <source>
    </source>
</evidence>
<evidence type="ECO:0000305" key="27">
    <source>
    </source>
</evidence>
<evidence type="ECO:0000305" key="28">
    <source>
    </source>
</evidence>
<evidence type="ECO:0000305" key="29">
    <source>
    </source>
</evidence>
<evidence type="ECO:0007744" key="30">
    <source>
        <dbReference type="PDB" id="1EUA"/>
    </source>
</evidence>
<evidence type="ECO:0007744" key="31">
    <source>
        <dbReference type="PDB" id="1EUN"/>
    </source>
</evidence>
<evidence type="ECO:0007744" key="32">
    <source>
        <dbReference type="PDB" id="1FQ0"/>
    </source>
</evidence>
<evidence type="ECO:0007744" key="33">
    <source>
        <dbReference type="PDB" id="1FWR"/>
    </source>
</evidence>
<evidence type="ECO:0007744" key="34">
    <source>
        <dbReference type="PDB" id="1WAU"/>
    </source>
</evidence>
<evidence type="ECO:0007744" key="35">
    <source>
        <dbReference type="PDB" id="1WBH"/>
    </source>
</evidence>
<evidence type="ECO:0007744" key="36">
    <source>
        <dbReference type="PDB" id="2C0A"/>
    </source>
</evidence>
<evidence type="ECO:0007829" key="37">
    <source>
        <dbReference type="PDB" id="1WBH"/>
    </source>
</evidence>